<keyword id="KW-0072">Autophagy</keyword>
<keyword id="KW-0963">Cytoplasm</keyword>
<keyword id="KW-0968">Cytoplasmic vesicle</keyword>
<keyword id="KW-0206">Cytoskeleton</keyword>
<keyword id="KW-0449">Lipoprotein</keyword>
<keyword id="KW-0472">Membrane</keyword>
<keyword id="KW-0493">Microtubule</keyword>
<keyword id="KW-0653">Protein transport</keyword>
<keyword id="KW-1185">Reference proteome</keyword>
<keyword id="KW-0813">Transport</keyword>
<keyword id="KW-0833">Ubl conjugation pathway</keyword>
<keyword id="KW-0926">Vacuole</keyword>
<name>ATG8A_ORYSJ</name>
<organism>
    <name type="scientific">Oryza sativa subsp. japonica</name>
    <name type="common">Rice</name>
    <dbReference type="NCBI Taxonomy" id="39947"/>
    <lineage>
        <taxon>Eukaryota</taxon>
        <taxon>Viridiplantae</taxon>
        <taxon>Streptophyta</taxon>
        <taxon>Embryophyta</taxon>
        <taxon>Tracheophyta</taxon>
        <taxon>Spermatophyta</taxon>
        <taxon>Magnoliopsida</taxon>
        <taxon>Liliopsida</taxon>
        <taxon>Poales</taxon>
        <taxon>Poaceae</taxon>
        <taxon>BOP clade</taxon>
        <taxon>Oryzoideae</taxon>
        <taxon>Oryzeae</taxon>
        <taxon>Oryzinae</taxon>
        <taxon>Oryza</taxon>
        <taxon>Oryza sativa</taxon>
    </lineage>
</organism>
<proteinExistence type="inferred from homology"/>
<sequence length="119" mass="13664">MARTSFKLEHPLERRQAESARIREKYSDRIPVIVEKADKTDVPEIDKKKYLVPADLTVGQFVYVVRKRIKLSPEKAIFVFVKNTLPPTASLMSAIYEENKDEDGFLYMTYSGENTFGSA</sequence>
<gene>
    <name type="primary">ATG8A</name>
    <name type="synonym">APG8A</name>
    <name type="ordered locus">Os07g0512200</name>
    <name type="ordered locus">LOC_Os07g32800</name>
    <name type="ORF">OsJ_023466</name>
    <name type="ORF">OSJNBb0041J06.103</name>
    <name type="ORF">P0580A11.122</name>
</gene>
<accession>Q69RC4</accession>
<accession>B7E4C9</accession>
<reference key="1">
    <citation type="journal article" date="2005" name="Nature">
        <title>The map-based sequence of the rice genome.</title>
        <authorList>
            <consortium name="International rice genome sequencing project (IRGSP)"/>
        </authorList>
    </citation>
    <scope>NUCLEOTIDE SEQUENCE [LARGE SCALE GENOMIC DNA]</scope>
    <source>
        <strain>cv. Nipponbare</strain>
    </source>
</reference>
<reference key="2">
    <citation type="journal article" date="2008" name="Nucleic Acids Res.">
        <title>The rice annotation project database (RAP-DB): 2008 update.</title>
        <authorList>
            <consortium name="The rice annotation project (RAP)"/>
        </authorList>
    </citation>
    <scope>GENOME REANNOTATION</scope>
    <source>
        <strain>cv. Nipponbare</strain>
    </source>
</reference>
<reference key="3">
    <citation type="journal article" date="2013" name="Rice">
        <title>Improvement of the Oryza sativa Nipponbare reference genome using next generation sequence and optical map data.</title>
        <authorList>
            <person name="Kawahara Y."/>
            <person name="de la Bastide M."/>
            <person name="Hamilton J.P."/>
            <person name="Kanamori H."/>
            <person name="McCombie W.R."/>
            <person name="Ouyang S."/>
            <person name="Schwartz D.C."/>
            <person name="Tanaka T."/>
            <person name="Wu J."/>
            <person name="Zhou S."/>
            <person name="Childs K.L."/>
            <person name="Davidson R.M."/>
            <person name="Lin H."/>
            <person name="Quesada-Ocampo L."/>
            <person name="Vaillancourt B."/>
            <person name="Sakai H."/>
            <person name="Lee S.S."/>
            <person name="Kim J."/>
            <person name="Numa H."/>
            <person name="Itoh T."/>
            <person name="Buell C.R."/>
            <person name="Matsumoto T."/>
        </authorList>
    </citation>
    <scope>GENOME REANNOTATION</scope>
    <source>
        <strain>cv. Nipponbare</strain>
    </source>
</reference>
<reference key="4">
    <citation type="journal article" date="2005" name="PLoS Biol.">
        <title>The genomes of Oryza sativa: a history of duplications.</title>
        <authorList>
            <person name="Yu J."/>
            <person name="Wang J."/>
            <person name="Lin W."/>
            <person name="Li S."/>
            <person name="Li H."/>
            <person name="Zhou J."/>
            <person name="Ni P."/>
            <person name="Dong W."/>
            <person name="Hu S."/>
            <person name="Zeng C."/>
            <person name="Zhang J."/>
            <person name="Zhang Y."/>
            <person name="Li R."/>
            <person name="Xu Z."/>
            <person name="Li S."/>
            <person name="Li X."/>
            <person name="Zheng H."/>
            <person name="Cong L."/>
            <person name="Lin L."/>
            <person name="Yin J."/>
            <person name="Geng J."/>
            <person name="Li G."/>
            <person name="Shi J."/>
            <person name="Liu J."/>
            <person name="Lv H."/>
            <person name="Li J."/>
            <person name="Wang J."/>
            <person name="Deng Y."/>
            <person name="Ran L."/>
            <person name="Shi X."/>
            <person name="Wang X."/>
            <person name="Wu Q."/>
            <person name="Li C."/>
            <person name="Ren X."/>
            <person name="Wang J."/>
            <person name="Wang X."/>
            <person name="Li D."/>
            <person name="Liu D."/>
            <person name="Zhang X."/>
            <person name="Ji Z."/>
            <person name="Zhao W."/>
            <person name="Sun Y."/>
            <person name="Zhang Z."/>
            <person name="Bao J."/>
            <person name="Han Y."/>
            <person name="Dong L."/>
            <person name="Ji J."/>
            <person name="Chen P."/>
            <person name="Wu S."/>
            <person name="Liu J."/>
            <person name="Xiao Y."/>
            <person name="Bu D."/>
            <person name="Tan J."/>
            <person name="Yang L."/>
            <person name="Ye C."/>
            <person name="Zhang J."/>
            <person name="Xu J."/>
            <person name="Zhou Y."/>
            <person name="Yu Y."/>
            <person name="Zhang B."/>
            <person name="Zhuang S."/>
            <person name="Wei H."/>
            <person name="Liu B."/>
            <person name="Lei M."/>
            <person name="Yu H."/>
            <person name="Li Y."/>
            <person name="Xu H."/>
            <person name="Wei S."/>
            <person name="He X."/>
            <person name="Fang L."/>
            <person name="Zhang Z."/>
            <person name="Zhang Y."/>
            <person name="Huang X."/>
            <person name="Su Z."/>
            <person name="Tong W."/>
            <person name="Li J."/>
            <person name="Tong Z."/>
            <person name="Li S."/>
            <person name="Ye J."/>
            <person name="Wang L."/>
            <person name="Fang L."/>
            <person name="Lei T."/>
            <person name="Chen C.-S."/>
            <person name="Chen H.-C."/>
            <person name="Xu Z."/>
            <person name="Li H."/>
            <person name="Huang H."/>
            <person name="Zhang F."/>
            <person name="Xu H."/>
            <person name="Li N."/>
            <person name="Zhao C."/>
            <person name="Li S."/>
            <person name="Dong L."/>
            <person name="Huang Y."/>
            <person name="Li L."/>
            <person name="Xi Y."/>
            <person name="Qi Q."/>
            <person name="Li W."/>
            <person name="Zhang B."/>
            <person name="Hu W."/>
            <person name="Zhang Y."/>
            <person name="Tian X."/>
            <person name="Jiao Y."/>
            <person name="Liang X."/>
            <person name="Jin J."/>
            <person name="Gao L."/>
            <person name="Zheng W."/>
            <person name="Hao B."/>
            <person name="Liu S.-M."/>
            <person name="Wang W."/>
            <person name="Yuan L."/>
            <person name="Cao M."/>
            <person name="McDermott J."/>
            <person name="Samudrala R."/>
            <person name="Wang J."/>
            <person name="Wong G.K.-S."/>
            <person name="Yang H."/>
        </authorList>
    </citation>
    <scope>NUCLEOTIDE SEQUENCE [LARGE SCALE GENOMIC DNA]</scope>
    <source>
        <strain>cv. Nipponbare</strain>
    </source>
</reference>
<reference key="5">
    <citation type="journal article" date="2003" name="Science">
        <title>Collection, mapping, and annotation of over 28,000 cDNA clones from japonica rice.</title>
        <authorList>
            <consortium name="The rice full-length cDNA consortium"/>
        </authorList>
    </citation>
    <scope>NUCLEOTIDE SEQUENCE [LARGE SCALE MRNA]</scope>
    <source>
        <strain>cv. Nipponbare</strain>
    </source>
</reference>
<feature type="chain" id="PRO_0000286923" description="Autophagy-related protein 8A">
    <location>
        <begin position="1"/>
        <end position="117"/>
    </location>
</feature>
<feature type="propeptide" id="PRO_0000286924" description="Removed in mature form" evidence="2">
    <location>
        <begin position="118"/>
        <end position="119"/>
    </location>
</feature>
<feature type="site" description="Cleavage; by ATG4" evidence="2">
    <location>
        <begin position="117"/>
        <end position="118"/>
    </location>
</feature>
<feature type="lipid moiety-binding region" description="Phosphatidylethanolamine amidated glycine" evidence="1">
    <location>
        <position position="117"/>
    </location>
</feature>
<protein>
    <recommendedName>
        <fullName>Autophagy-related protein 8A</fullName>
    </recommendedName>
    <alternativeName>
        <fullName>Autophagy-related ubiquitin-like modifier ATG8A</fullName>
    </alternativeName>
</protein>
<evidence type="ECO:0000250" key="1">
    <source>
        <dbReference type="UniProtKB" id="P38182"/>
    </source>
</evidence>
<evidence type="ECO:0000250" key="2">
    <source>
        <dbReference type="UniProtKB" id="Q2XPP5"/>
    </source>
</evidence>
<evidence type="ECO:0000250" key="3">
    <source>
        <dbReference type="UniProtKB" id="Q8LEM4"/>
    </source>
</evidence>
<evidence type="ECO:0000305" key="4"/>
<comment type="function">
    <text evidence="1">Ubiquitin-like modifier involved in autophagosomes formation. May mediate the delivery of the autophagosomes to the vacuole via the microtubule cytoskeleton.</text>
</comment>
<comment type="subunit">
    <text evidence="2">Interacts with ATG4.</text>
</comment>
<comment type="subcellular location">
    <subcellularLocation>
        <location evidence="1">Cytoplasmic vesicle</location>
        <location evidence="1">Autophagosome membrane</location>
        <topology evidence="1">Lipid-anchor</topology>
    </subcellularLocation>
    <subcellularLocation>
        <location evidence="1">Vacuole membrane</location>
        <topology evidence="1">Lipid-anchor</topology>
    </subcellularLocation>
    <subcellularLocation>
        <location evidence="3">Cytoplasm</location>
        <location evidence="3">Cytoskeleton</location>
    </subcellularLocation>
</comment>
<comment type="PTM">
    <text evidence="1">The C-terminal 2 residues are removed by ATG4 to expose Gly-117 at the C-terminus. The C-terminal Gly is then amidated with phosphatidylethanolamine by an activating system similar to that for ubiquitin.</text>
</comment>
<comment type="similarity">
    <text evidence="4">Belongs to the ATG8 family.</text>
</comment>
<dbReference type="EMBL" id="AP005176">
    <property type="protein sequence ID" value="BAD31027.1"/>
    <property type="molecule type" value="Genomic_DNA"/>
</dbReference>
<dbReference type="EMBL" id="AP005196">
    <property type="protein sequence ID" value="BAD31175.1"/>
    <property type="molecule type" value="Genomic_DNA"/>
</dbReference>
<dbReference type="EMBL" id="AP008213">
    <property type="protein sequence ID" value="BAF21681.1"/>
    <property type="molecule type" value="Genomic_DNA"/>
</dbReference>
<dbReference type="EMBL" id="AP014963">
    <property type="protein sequence ID" value="BAT01724.1"/>
    <property type="molecule type" value="Genomic_DNA"/>
</dbReference>
<dbReference type="EMBL" id="CM000144">
    <property type="protein sequence ID" value="EAZ39983.1"/>
    <property type="molecule type" value="Genomic_DNA"/>
</dbReference>
<dbReference type="EMBL" id="AK059939">
    <property type="protein sequence ID" value="BAG87226.1"/>
    <property type="molecule type" value="mRNA"/>
</dbReference>
<dbReference type="RefSeq" id="XP_015647608.1">
    <property type="nucleotide sequence ID" value="XM_015792122.1"/>
</dbReference>
<dbReference type="SMR" id="Q69RC4"/>
<dbReference type="FunCoup" id="Q69RC4">
    <property type="interactions" value="2218"/>
</dbReference>
<dbReference type="STRING" id="39947.Q69RC4"/>
<dbReference type="PaxDb" id="39947-Q69RC4"/>
<dbReference type="EnsemblPlants" id="Os07t0512200-01">
    <property type="protein sequence ID" value="Os07t0512200-01"/>
    <property type="gene ID" value="Os07g0512200"/>
</dbReference>
<dbReference type="Gramene" id="Os07t0512200-01">
    <property type="protein sequence ID" value="Os07t0512200-01"/>
    <property type="gene ID" value="Os07g0512200"/>
</dbReference>
<dbReference type="KEGG" id="dosa:Os07g0512200"/>
<dbReference type="eggNOG" id="KOG1654">
    <property type="taxonomic scope" value="Eukaryota"/>
</dbReference>
<dbReference type="HOGENOM" id="CLU_119276_0_1_1"/>
<dbReference type="InParanoid" id="Q69RC4"/>
<dbReference type="OMA" id="KNQIRAK"/>
<dbReference type="OrthoDB" id="6738456at2759"/>
<dbReference type="Proteomes" id="UP000000763">
    <property type="component" value="Chromosome 7"/>
</dbReference>
<dbReference type="Proteomes" id="UP000007752">
    <property type="component" value="Chromosome 7"/>
</dbReference>
<dbReference type="Proteomes" id="UP000059680">
    <property type="component" value="Chromosome 7"/>
</dbReference>
<dbReference type="GO" id="GO:0000421">
    <property type="term" value="C:autophagosome membrane"/>
    <property type="evidence" value="ECO:0000318"/>
    <property type="project" value="GO_Central"/>
</dbReference>
<dbReference type="GO" id="GO:0031410">
    <property type="term" value="C:cytoplasmic vesicle"/>
    <property type="evidence" value="ECO:0007669"/>
    <property type="project" value="UniProtKB-KW"/>
</dbReference>
<dbReference type="GO" id="GO:0005874">
    <property type="term" value="C:microtubule"/>
    <property type="evidence" value="ECO:0007669"/>
    <property type="project" value="UniProtKB-KW"/>
</dbReference>
<dbReference type="GO" id="GO:0008429">
    <property type="term" value="F:phosphatidylethanolamine binding"/>
    <property type="evidence" value="ECO:0000318"/>
    <property type="project" value="GO_Central"/>
</dbReference>
<dbReference type="GO" id="GO:0000045">
    <property type="term" value="P:autophagosome assembly"/>
    <property type="evidence" value="ECO:0000318"/>
    <property type="project" value="GO_Central"/>
</dbReference>
<dbReference type="GO" id="GO:0097352">
    <property type="term" value="P:autophagosome maturation"/>
    <property type="evidence" value="ECO:0000318"/>
    <property type="project" value="GO_Central"/>
</dbReference>
<dbReference type="GO" id="GO:0006995">
    <property type="term" value="P:cellular response to nitrogen starvation"/>
    <property type="evidence" value="ECO:0000318"/>
    <property type="project" value="GO_Central"/>
</dbReference>
<dbReference type="GO" id="GO:0000423">
    <property type="term" value="P:mitophagy"/>
    <property type="evidence" value="ECO:0000318"/>
    <property type="project" value="GO_Central"/>
</dbReference>
<dbReference type="GO" id="GO:0015031">
    <property type="term" value="P:protein transport"/>
    <property type="evidence" value="ECO:0007669"/>
    <property type="project" value="UniProtKB-KW"/>
</dbReference>
<dbReference type="CDD" id="cd16128">
    <property type="entry name" value="Ubl_ATG8"/>
    <property type="match status" value="1"/>
</dbReference>
<dbReference type="FunFam" id="3.10.20.90:FF:000010">
    <property type="entry name" value="Autophagy-related protein"/>
    <property type="match status" value="1"/>
</dbReference>
<dbReference type="Gene3D" id="3.10.20.90">
    <property type="entry name" value="Phosphatidylinositol 3-kinase Catalytic Subunit, Chain A, domain 1"/>
    <property type="match status" value="1"/>
</dbReference>
<dbReference type="InterPro" id="IPR004241">
    <property type="entry name" value="Atg8-like"/>
</dbReference>
<dbReference type="InterPro" id="IPR029071">
    <property type="entry name" value="Ubiquitin-like_domsf"/>
</dbReference>
<dbReference type="PANTHER" id="PTHR10969">
    <property type="entry name" value="MICROTUBULE-ASSOCIATED PROTEINS 1A/1B LIGHT CHAIN 3-RELATED"/>
    <property type="match status" value="1"/>
</dbReference>
<dbReference type="Pfam" id="PF02991">
    <property type="entry name" value="ATG8"/>
    <property type="match status" value="1"/>
</dbReference>
<dbReference type="SUPFAM" id="SSF54236">
    <property type="entry name" value="Ubiquitin-like"/>
    <property type="match status" value="1"/>
</dbReference>